<reference key="1">
    <citation type="journal article" date="2010" name="Genome Biol. Evol.">
        <title>Continuing evolution of Burkholderia mallei through genome reduction and large-scale rearrangements.</title>
        <authorList>
            <person name="Losada L."/>
            <person name="Ronning C.M."/>
            <person name="DeShazer D."/>
            <person name="Woods D."/>
            <person name="Fedorova N."/>
            <person name="Kim H.S."/>
            <person name="Shabalina S.A."/>
            <person name="Pearson T.R."/>
            <person name="Brinkac L."/>
            <person name="Tan P."/>
            <person name="Nandi T."/>
            <person name="Crabtree J."/>
            <person name="Badger J."/>
            <person name="Beckstrom-Sternberg S."/>
            <person name="Saqib M."/>
            <person name="Schutzer S.E."/>
            <person name="Keim P."/>
            <person name="Nierman W.C."/>
        </authorList>
    </citation>
    <scope>NUCLEOTIDE SEQUENCE [LARGE SCALE GENOMIC DNA]</scope>
    <source>
        <strain>1710b</strain>
    </source>
</reference>
<gene>
    <name evidence="1" type="primary">groEL2</name>
    <name evidence="1" type="synonym">groL2</name>
    <name type="ordered locus">BURPS1710b_A2030</name>
</gene>
<name>CH602_BURP1</name>
<proteinExistence type="inferred from homology"/>
<feature type="chain" id="PRO_0000256882" description="Chaperonin GroEL 2">
    <location>
        <begin position="1"/>
        <end position="546"/>
    </location>
</feature>
<feature type="region of interest" description="Disordered" evidence="2">
    <location>
        <begin position="524"/>
        <end position="546"/>
    </location>
</feature>
<feature type="compositionally biased region" description="Gly residues" evidence="2">
    <location>
        <begin position="537"/>
        <end position="546"/>
    </location>
</feature>
<feature type="binding site" evidence="1">
    <location>
        <begin position="30"/>
        <end position="33"/>
    </location>
    <ligand>
        <name>ATP</name>
        <dbReference type="ChEBI" id="CHEBI:30616"/>
    </ligand>
</feature>
<feature type="binding site" evidence="1">
    <location>
        <position position="51"/>
    </location>
    <ligand>
        <name>ATP</name>
        <dbReference type="ChEBI" id="CHEBI:30616"/>
    </ligand>
</feature>
<feature type="binding site" evidence="1">
    <location>
        <begin position="87"/>
        <end position="91"/>
    </location>
    <ligand>
        <name>ATP</name>
        <dbReference type="ChEBI" id="CHEBI:30616"/>
    </ligand>
</feature>
<feature type="binding site" evidence="1">
    <location>
        <position position="415"/>
    </location>
    <ligand>
        <name>ATP</name>
        <dbReference type="ChEBI" id="CHEBI:30616"/>
    </ligand>
</feature>
<feature type="binding site" evidence="1">
    <location>
        <begin position="479"/>
        <end position="481"/>
    </location>
    <ligand>
        <name>ATP</name>
        <dbReference type="ChEBI" id="CHEBI:30616"/>
    </ligand>
</feature>
<feature type="binding site" evidence="1">
    <location>
        <position position="495"/>
    </location>
    <ligand>
        <name>ATP</name>
        <dbReference type="ChEBI" id="CHEBI:30616"/>
    </ligand>
</feature>
<dbReference type="EC" id="5.6.1.7" evidence="1"/>
<dbReference type="EMBL" id="CP000125">
    <property type="protein sequence ID" value="ABA53143.1"/>
    <property type="molecule type" value="Genomic_DNA"/>
</dbReference>
<dbReference type="SMR" id="Q3JGX2"/>
<dbReference type="EnsemblBacteria" id="ABA53143">
    <property type="protein sequence ID" value="ABA53143"/>
    <property type="gene ID" value="BURPS1710b_A2030"/>
</dbReference>
<dbReference type="KEGG" id="bpm:BURPS1710b_A2030"/>
<dbReference type="HOGENOM" id="CLU_016503_3_0_4"/>
<dbReference type="Proteomes" id="UP000002700">
    <property type="component" value="Chromosome II"/>
</dbReference>
<dbReference type="GO" id="GO:0005737">
    <property type="term" value="C:cytoplasm"/>
    <property type="evidence" value="ECO:0007669"/>
    <property type="project" value="UniProtKB-SubCell"/>
</dbReference>
<dbReference type="GO" id="GO:0005524">
    <property type="term" value="F:ATP binding"/>
    <property type="evidence" value="ECO:0007669"/>
    <property type="project" value="UniProtKB-UniRule"/>
</dbReference>
<dbReference type="GO" id="GO:0140662">
    <property type="term" value="F:ATP-dependent protein folding chaperone"/>
    <property type="evidence" value="ECO:0007669"/>
    <property type="project" value="InterPro"/>
</dbReference>
<dbReference type="GO" id="GO:0016853">
    <property type="term" value="F:isomerase activity"/>
    <property type="evidence" value="ECO:0007669"/>
    <property type="project" value="UniProtKB-KW"/>
</dbReference>
<dbReference type="GO" id="GO:0051082">
    <property type="term" value="F:unfolded protein binding"/>
    <property type="evidence" value="ECO:0007669"/>
    <property type="project" value="UniProtKB-UniRule"/>
</dbReference>
<dbReference type="GO" id="GO:0042026">
    <property type="term" value="P:protein refolding"/>
    <property type="evidence" value="ECO:0007669"/>
    <property type="project" value="UniProtKB-UniRule"/>
</dbReference>
<dbReference type="CDD" id="cd03344">
    <property type="entry name" value="GroEL"/>
    <property type="match status" value="1"/>
</dbReference>
<dbReference type="FunFam" id="3.50.7.10:FF:000001">
    <property type="entry name" value="60 kDa chaperonin"/>
    <property type="match status" value="1"/>
</dbReference>
<dbReference type="Gene3D" id="3.50.7.10">
    <property type="entry name" value="GroEL"/>
    <property type="match status" value="1"/>
</dbReference>
<dbReference type="Gene3D" id="1.10.560.10">
    <property type="entry name" value="GroEL-like equatorial domain"/>
    <property type="match status" value="1"/>
</dbReference>
<dbReference type="Gene3D" id="3.30.260.10">
    <property type="entry name" value="TCP-1-like chaperonin intermediate domain"/>
    <property type="match status" value="1"/>
</dbReference>
<dbReference type="HAMAP" id="MF_00600">
    <property type="entry name" value="CH60"/>
    <property type="match status" value="1"/>
</dbReference>
<dbReference type="InterPro" id="IPR018370">
    <property type="entry name" value="Chaperonin_Cpn60_CS"/>
</dbReference>
<dbReference type="InterPro" id="IPR001844">
    <property type="entry name" value="Cpn60/GroEL"/>
</dbReference>
<dbReference type="InterPro" id="IPR002423">
    <property type="entry name" value="Cpn60/GroEL/TCP-1"/>
</dbReference>
<dbReference type="InterPro" id="IPR027409">
    <property type="entry name" value="GroEL-like_apical_dom_sf"/>
</dbReference>
<dbReference type="InterPro" id="IPR027413">
    <property type="entry name" value="GROEL-like_equatorial_sf"/>
</dbReference>
<dbReference type="InterPro" id="IPR027410">
    <property type="entry name" value="TCP-1-like_intermed_sf"/>
</dbReference>
<dbReference type="NCBIfam" id="TIGR02348">
    <property type="entry name" value="GroEL"/>
    <property type="match status" value="1"/>
</dbReference>
<dbReference type="NCBIfam" id="NF000592">
    <property type="entry name" value="PRK00013.1"/>
    <property type="match status" value="1"/>
</dbReference>
<dbReference type="NCBIfam" id="NF009487">
    <property type="entry name" value="PRK12849.1"/>
    <property type="match status" value="1"/>
</dbReference>
<dbReference type="NCBIfam" id="NF009488">
    <property type="entry name" value="PRK12850.1"/>
    <property type="match status" value="1"/>
</dbReference>
<dbReference type="NCBIfam" id="NF009489">
    <property type="entry name" value="PRK12851.1"/>
    <property type="match status" value="1"/>
</dbReference>
<dbReference type="PANTHER" id="PTHR45633">
    <property type="entry name" value="60 KDA HEAT SHOCK PROTEIN, MITOCHONDRIAL"/>
    <property type="match status" value="1"/>
</dbReference>
<dbReference type="Pfam" id="PF00118">
    <property type="entry name" value="Cpn60_TCP1"/>
    <property type="match status" value="1"/>
</dbReference>
<dbReference type="PRINTS" id="PR00298">
    <property type="entry name" value="CHAPERONIN60"/>
</dbReference>
<dbReference type="SUPFAM" id="SSF52029">
    <property type="entry name" value="GroEL apical domain-like"/>
    <property type="match status" value="1"/>
</dbReference>
<dbReference type="SUPFAM" id="SSF48592">
    <property type="entry name" value="GroEL equatorial domain-like"/>
    <property type="match status" value="1"/>
</dbReference>
<dbReference type="SUPFAM" id="SSF54849">
    <property type="entry name" value="GroEL-intermediate domain like"/>
    <property type="match status" value="1"/>
</dbReference>
<dbReference type="PROSITE" id="PS00296">
    <property type="entry name" value="CHAPERONINS_CPN60"/>
    <property type="match status" value="1"/>
</dbReference>
<organism>
    <name type="scientific">Burkholderia pseudomallei (strain 1710b)</name>
    <dbReference type="NCBI Taxonomy" id="320372"/>
    <lineage>
        <taxon>Bacteria</taxon>
        <taxon>Pseudomonadati</taxon>
        <taxon>Pseudomonadota</taxon>
        <taxon>Betaproteobacteria</taxon>
        <taxon>Burkholderiales</taxon>
        <taxon>Burkholderiaceae</taxon>
        <taxon>Burkholderia</taxon>
        <taxon>pseudomallei group</taxon>
    </lineage>
</organism>
<evidence type="ECO:0000255" key="1">
    <source>
        <dbReference type="HAMAP-Rule" id="MF_00600"/>
    </source>
</evidence>
<evidence type="ECO:0000256" key="2">
    <source>
        <dbReference type="SAM" id="MobiDB-lite"/>
    </source>
</evidence>
<protein>
    <recommendedName>
        <fullName evidence="1">Chaperonin GroEL 2</fullName>
        <ecNumber evidence="1">5.6.1.7</ecNumber>
    </recommendedName>
    <alternativeName>
        <fullName evidence="1">60 kDa chaperonin 2</fullName>
    </alternativeName>
    <alternativeName>
        <fullName evidence="1">Chaperonin-60 2</fullName>
        <shortName evidence="1">Cpn60 2</shortName>
    </alternativeName>
</protein>
<sequence length="546" mass="56974">MAAKEIIFHDGARAKLVEGVNLLANAVKVTLGPKGRNVVLERSFGSPVVTKDGVSVAKEIELADKVQNIGAQLVKEVASKTSDAAGDGTTTATVLAQAIVREGQKYVAAGLNPLDLKRGIDKAVAAAVDELKKISKPTTTSKEIAQVATISANGEESIGQRIAEAIDRVGKEGVITVEDGKSLADELDVVEGLQFDRGYLSPYFINHPERQLAVLDEPFILLHDKKISNIRDLLPVLEQVAKAGRPLLIVAEDVEGEALATLVVNNIRGILKTVAVKAPGFGDRRKALLEDIAILTGGQVITEETGLTLEKATLQELGRAKRIEVGKENTTLIDGAGDKPNIDARVKQIRAQIAEATSDYDREKLQERVAKLAGGVAVIKVGGATEVEVKEKKDRVDDALHATRAAVEEGIVPGGGVALIRVKQAIAALAGANADQKAGISIVLRALEEPLRQIVANAGEEASVVVATVAAGQGNYGYNAATGEYGDLVESGVLDPTKVTRTALQNAASIAGLLLTTDATVHEAPKDAPPAAPAGVPGAGGPGFDF</sequence>
<keyword id="KW-0067">ATP-binding</keyword>
<keyword id="KW-0143">Chaperone</keyword>
<keyword id="KW-0963">Cytoplasm</keyword>
<keyword id="KW-0413">Isomerase</keyword>
<keyword id="KW-0547">Nucleotide-binding</keyword>
<accession>Q3JGX2</accession>
<comment type="function">
    <text evidence="1">Together with its co-chaperonin GroES, plays an essential role in assisting protein folding. The GroEL-GroES system forms a nano-cage that allows encapsulation of the non-native substrate proteins and provides a physical environment optimized to promote and accelerate protein folding.</text>
</comment>
<comment type="catalytic activity">
    <reaction evidence="1">
        <text>ATP + H2O + a folded polypeptide = ADP + phosphate + an unfolded polypeptide.</text>
        <dbReference type="EC" id="5.6.1.7"/>
    </reaction>
</comment>
<comment type="subunit">
    <text evidence="1">Forms a cylinder of 14 subunits composed of two heptameric rings stacked back-to-back. Interacts with the co-chaperonin GroES.</text>
</comment>
<comment type="subcellular location">
    <subcellularLocation>
        <location evidence="1">Cytoplasm</location>
    </subcellularLocation>
</comment>
<comment type="similarity">
    <text evidence="1">Belongs to the chaperonin (HSP60) family.</text>
</comment>